<organism>
    <name type="scientific">Candida glabrata (strain ATCC 2001 / BCRC 20586 / JCM 3761 / NBRC 0622 / NRRL Y-65 / CBS 138)</name>
    <name type="common">Yeast</name>
    <name type="synonym">Nakaseomyces glabratus</name>
    <dbReference type="NCBI Taxonomy" id="284593"/>
    <lineage>
        <taxon>Eukaryota</taxon>
        <taxon>Fungi</taxon>
        <taxon>Dikarya</taxon>
        <taxon>Ascomycota</taxon>
        <taxon>Saccharomycotina</taxon>
        <taxon>Saccharomycetes</taxon>
        <taxon>Saccharomycetales</taxon>
        <taxon>Saccharomycetaceae</taxon>
        <taxon>Nakaseomyces</taxon>
    </lineage>
</organism>
<accession>O74683</accession>
<evidence type="ECO:0000250" key="1"/>
<evidence type="ECO:0000255" key="2"/>
<evidence type="ECO:0000305" key="3"/>
<dbReference type="EMBL" id="AF064251">
    <property type="protein sequence ID" value="AAC64008.1"/>
    <property type="molecule type" value="Genomic_DNA"/>
</dbReference>
<dbReference type="EMBL" id="CR380949">
    <property type="protein sequence ID" value="CAG58101.1"/>
    <property type="molecule type" value="Genomic_DNA"/>
</dbReference>
<dbReference type="RefSeq" id="XP_445197.1">
    <property type="nucleotide sequence ID" value="XM_445197.1"/>
</dbReference>
<dbReference type="FunCoup" id="O74683">
    <property type="interactions" value="17"/>
</dbReference>
<dbReference type="STRING" id="284593.O74683"/>
<dbReference type="EnsemblFungi" id="CAGL0C00363g-T">
    <property type="protein sequence ID" value="CAGL0C00363g-T-p1"/>
    <property type="gene ID" value="CAGL0C00363g"/>
</dbReference>
<dbReference type="GeneID" id="2886951"/>
<dbReference type="KEGG" id="cgr:2886951"/>
<dbReference type="CGD" id="CAL0127358">
    <property type="gene designation" value="KRE9"/>
</dbReference>
<dbReference type="VEuPathDB" id="FungiDB:B1J91_C00363g"/>
<dbReference type="VEuPathDB" id="FungiDB:CAGL0C00363g"/>
<dbReference type="eggNOG" id="ENOG502S28F">
    <property type="taxonomic scope" value="Eukaryota"/>
</dbReference>
<dbReference type="HOGENOM" id="CLU_063732_1_0_1"/>
<dbReference type="InParanoid" id="O74683"/>
<dbReference type="OMA" id="PEAFAIN"/>
<dbReference type="Proteomes" id="UP000002428">
    <property type="component" value="Chromosome C"/>
</dbReference>
<dbReference type="GO" id="GO:0005576">
    <property type="term" value="C:extracellular region"/>
    <property type="evidence" value="ECO:0000314"/>
    <property type="project" value="CGD"/>
</dbReference>
<dbReference type="GO" id="GO:0062040">
    <property type="term" value="C:fungal biofilm matrix"/>
    <property type="evidence" value="ECO:0000314"/>
    <property type="project" value="CGD"/>
</dbReference>
<dbReference type="GO" id="GO:0006078">
    <property type="term" value="P:(1-&gt;6)-beta-D-glucan biosynthetic process"/>
    <property type="evidence" value="ECO:0007669"/>
    <property type="project" value="InterPro"/>
</dbReference>
<dbReference type="GO" id="GO:0006077">
    <property type="term" value="P:(1-&gt;6)-beta-D-glucan metabolic process"/>
    <property type="evidence" value="ECO:0000315"/>
    <property type="project" value="CGD"/>
</dbReference>
<dbReference type="GO" id="GO:0042546">
    <property type="term" value="P:cell wall biogenesis"/>
    <property type="evidence" value="ECO:0007669"/>
    <property type="project" value="InterPro"/>
</dbReference>
<dbReference type="GO" id="GO:0031505">
    <property type="term" value="P:fungal-type cell wall organization"/>
    <property type="evidence" value="ECO:0000315"/>
    <property type="project" value="CGD"/>
</dbReference>
<dbReference type="InterPro" id="IPR045328">
    <property type="entry name" value="Kre9/Knh1"/>
</dbReference>
<dbReference type="InterPro" id="IPR008659">
    <property type="entry name" value="Kre9/Knh1_C"/>
</dbReference>
<dbReference type="PANTHER" id="PTHR28154">
    <property type="entry name" value="CELL WALL SYNTHESIS PROTEIN KNH1-RELATED"/>
    <property type="match status" value="1"/>
</dbReference>
<dbReference type="PANTHER" id="PTHR28154:SF1">
    <property type="entry name" value="CELL WALL SYNTHESIS PROTEIN KNH1-RELATED"/>
    <property type="match status" value="1"/>
</dbReference>
<dbReference type="Pfam" id="PF05390">
    <property type="entry name" value="Kre9_KNH1_C"/>
    <property type="match status" value="1"/>
</dbReference>
<sequence length="276" mass="30549">MLLLAILLSLFALIRADVNIVEPGPGDTFSGADGTVSINLKWVDNGAYPPLDKVAYYLFSLCYGPNTKIQCVYKPDTKITPDDLDKDDAGTYSYKFDIQSSVVGSGQFYVQVFAWVDGQGYTLHYTPRIELTNMGGPTTFELLTYTDTIQPVPQTSIRTGTDTNTQSFDASSVYSLPYTEQTLKTRVAPIQQQPGTKVTATTWSRRYPTSAVTFYSTFRSSLDQLSTLTPAWNYTVSSAVNYATPAAMPSDNGGWYNPIKRQSLSTRKLNVRYLSS</sequence>
<feature type="signal peptide" evidence="2">
    <location>
        <begin position="1"/>
        <end position="16"/>
    </location>
</feature>
<feature type="chain" id="PRO_0000016848" description="Cell wall synthesis protein KRE9">
    <location>
        <begin position="17"/>
        <end position="276"/>
    </location>
</feature>
<protein>
    <recommendedName>
        <fullName>Cell wall synthesis protein KRE9</fullName>
    </recommendedName>
</protein>
<name>KRE9_CANGA</name>
<comment type="function">
    <text>Involved in cell wall beta(1-&gt;6) glucan synthesis.</text>
</comment>
<comment type="subcellular location">
    <subcellularLocation>
        <location evidence="3">Secreted</location>
        <location evidence="3">Cell wall</location>
    </subcellularLocation>
</comment>
<comment type="PTM">
    <text evidence="1">O-glycosylated.</text>
</comment>
<comment type="similarity">
    <text evidence="3">Belongs to the KRE9/KNH1 family.</text>
</comment>
<proteinExistence type="inferred from homology"/>
<gene>
    <name type="primary">KRE9</name>
    <name type="ordered locus">CAGL0C00363g</name>
</gene>
<keyword id="KW-0134">Cell wall</keyword>
<keyword id="KW-0961">Cell wall biogenesis/degradation</keyword>
<keyword id="KW-0325">Glycoprotein</keyword>
<keyword id="KW-1185">Reference proteome</keyword>
<keyword id="KW-0964">Secreted</keyword>
<keyword id="KW-0732">Signal</keyword>
<reference key="1">
    <citation type="journal article" date="1998" name="J. Bacteriol.">
        <title>Isolation of Candida glabrata homologs of the Saccharomyces cerevisiae KRE9 and KNH1 genes and their involvement in cell wall beta-1,6-glucan synthesis.</title>
        <authorList>
            <person name="Nagahashi S."/>
            <person name="Lussier M."/>
            <person name="Bussey H."/>
        </authorList>
    </citation>
    <scope>NUCLEOTIDE SEQUENCE [GENOMIC DNA]</scope>
    <source>
        <strain>ATCC 2001 / BCRC 20586 / JCM 3761 / NBRC 0622 / NRRL Y-65 / CBS 138</strain>
    </source>
</reference>
<reference key="2">
    <citation type="journal article" date="2004" name="Nature">
        <title>Genome evolution in yeasts.</title>
        <authorList>
            <person name="Dujon B."/>
            <person name="Sherman D."/>
            <person name="Fischer G."/>
            <person name="Durrens P."/>
            <person name="Casaregola S."/>
            <person name="Lafontaine I."/>
            <person name="de Montigny J."/>
            <person name="Marck C."/>
            <person name="Neuveglise C."/>
            <person name="Talla E."/>
            <person name="Goffard N."/>
            <person name="Frangeul L."/>
            <person name="Aigle M."/>
            <person name="Anthouard V."/>
            <person name="Babour A."/>
            <person name="Barbe V."/>
            <person name="Barnay S."/>
            <person name="Blanchin S."/>
            <person name="Beckerich J.-M."/>
            <person name="Beyne E."/>
            <person name="Bleykasten C."/>
            <person name="Boisrame A."/>
            <person name="Boyer J."/>
            <person name="Cattolico L."/>
            <person name="Confanioleri F."/>
            <person name="de Daruvar A."/>
            <person name="Despons L."/>
            <person name="Fabre E."/>
            <person name="Fairhead C."/>
            <person name="Ferry-Dumazet H."/>
            <person name="Groppi A."/>
            <person name="Hantraye F."/>
            <person name="Hennequin C."/>
            <person name="Jauniaux N."/>
            <person name="Joyet P."/>
            <person name="Kachouri R."/>
            <person name="Kerrest A."/>
            <person name="Koszul R."/>
            <person name="Lemaire M."/>
            <person name="Lesur I."/>
            <person name="Ma L."/>
            <person name="Muller H."/>
            <person name="Nicaud J.-M."/>
            <person name="Nikolski M."/>
            <person name="Oztas S."/>
            <person name="Ozier-Kalogeropoulos O."/>
            <person name="Pellenz S."/>
            <person name="Potier S."/>
            <person name="Richard G.-F."/>
            <person name="Straub M.-L."/>
            <person name="Suleau A."/>
            <person name="Swennen D."/>
            <person name="Tekaia F."/>
            <person name="Wesolowski-Louvel M."/>
            <person name="Westhof E."/>
            <person name="Wirth B."/>
            <person name="Zeniou-Meyer M."/>
            <person name="Zivanovic Y."/>
            <person name="Bolotin-Fukuhara M."/>
            <person name="Thierry A."/>
            <person name="Bouchier C."/>
            <person name="Caudron B."/>
            <person name="Scarpelli C."/>
            <person name="Gaillardin C."/>
            <person name="Weissenbach J."/>
            <person name="Wincker P."/>
            <person name="Souciet J.-L."/>
        </authorList>
    </citation>
    <scope>NUCLEOTIDE SEQUENCE [LARGE SCALE GENOMIC DNA]</scope>
    <source>
        <strain>ATCC 2001 / BCRC 20586 / JCM 3761 / NBRC 0622 / NRRL Y-65 / CBS 138</strain>
    </source>
</reference>